<keyword id="KW-0539">Nucleus</keyword>
<keyword id="KW-1185">Reference proteome</keyword>
<gene>
    <name type="primary">cdkn2aip-a</name>
</gene>
<reference key="1">
    <citation type="submission" date="2003-01" db="EMBL/GenBank/DDBJ databases">
        <authorList>
            <consortium name="NIH - Xenopus Gene Collection (XGC) project"/>
        </authorList>
    </citation>
    <scope>NUCLEOTIDE SEQUENCE [LARGE SCALE MRNA]</scope>
    <source>
        <tissue>Embryo</tissue>
    </source>
</reference>
<evidence type="ECO:0000250" key="1">
    <source>
        <dbReference type="UniProtKB" id="Q9NXV6"/>
    </source>
</evidence>
<evidence type="ECO:0000255" key="2">
    <source>
        <dbReference type="PROSITE-ProRule" id="PRU01171"/>
    </source>
</evidence>
<evidence type="ECO:0000256" key="3">
    <source>
        <dbReference type="SAM" id="MobiDB-lite"/>
    </source>
</evidence>
<evidence type="ECO:0000305" key="4"/>
<sequence>MADDVSEFLGQNPETAAWLELVHGECESDKLWRYRKEFILRNLSDVCGEAEVPPPPETNHKALDRLLAYSMVWANHVFTGCRYPLPVMEKVLKMAENIKVTDAPTHTTRDELVAKVKKRGISSSNEGVEEEPCKKQKSSDHGERESSYIEDTISDGNVPSTSLNKREARLSAAQRTDVNTEFYDKSSNRRSLPVSNAKSRLNLPEEAGYKHGATQGRKSHSDIRHQTSMKGPAQSSDNALKPTRRFTTEHTKERQPFFNRLYKTVAWKLVSAGGFNANLNHEELLNTCIESLKATLEVSFVPLTDLADLPQNKTSQENTVCELRCKSVYLGMGCGKTMETAKAVASREAVKLFLKKKVVVRICKRKFNGRDVEDLVLVDEEFRPVNLPPAIKNPQEIV</sequence>
<comment type="function">
    <text evidence="1">May regulate DNA damage response and cell proliferation.</text>
</comment>
<comment type="subcellular location">
    <subcellularLocation>
        <location evidence="1">Nucleus</location>
        <location evidence="1">Nucleoplasm</location>
    </subcellularLocation>
</comment>
<comment type="similarity">
    <text evidence="4">Belongs to the CARF family.</text>
</comment>
<dbReference type="EMBL" id="BC044102">
    <property type="protein sequence ID" value="AAH44102.1"/>
    <property type="molecule type" value="mRNA"/>
</dbReference>
<dbReference type="RefSeq" id="NP_001079547.1">
    <property type="nucleotide sequence ID" value="NM_001086078.1"/>
</dbReference>
<dbReference type="SMR" id="Q7ZXV6"/>
<dbReference type="BioGRID" id="97477">
    <property type="interactions" value="1"/>
</dbReference>
<dbReference type="IntAct" id="Q7ZXV6">
    <property type="interactions" value="2"/>
</dbReference>
<dbReference type="DNASU" id="379234"/>
<dbReference type="GeneID" id="379234"/>
<dbReference type="KEGG" id="xla:379234"/>
<dbReference type="AGR" id="Xenbase:XB-GENE-984880"/>
<dbReference type="CTD" id="379234"/>
<dbReference type="Xenbase" id="XB-GENE-984880">
    <property type="gene designation" value="cdkn2aip.L"/>
</dbReference>
<dbReference type="OrthoDB" id="2359216at2759"/>
<dbReference type="Proteomes" id="UP000186698">
    <property type="component" value="Chromosome 1L"/>
</dbReference>
<dbReference type="Bgee" id="379234">
    <property type="expression patterns" value="Expressed in blastula and 19 other cell types or tissues"/>
</dbReference>
<dbReference type="GO" id="GO:0005730">
    <property type="term" value="C:nucleolus"/>
    <property type="evidence" value="ECO:0000318"/>
    <property type="project" value="GO_Central"/>
</dbReference>
<dbReference type="GO" id="GO:0005654">
    <property type="term" value="C:nucleoplasm"/>
    <property type="evidence" value="ECO:0000318"/>
    <property type="project" value="GO_Central"/>
</dbReference>
<dbReference type="InterPro" id="IPR021859">
    <property type="entry name" value="XTBD"/>
</dbReference>
<dbReference type="PANTHER" id="PTHR16148:SF11">
    <property type="entry name" value="CDKN2A-INTERACTING PROTEIN"/>
    <property type="match status" value="1"/>
</dbReference>
<dbReference type="PANTHER" id="PTHR16148">
    <property type="entry name" value="NF-KAPPA-B-REPRESSING FACTOR-RELATED"/>
    <property type="match status" value="1"/>
</dbReference>
<dbReference type="Pfam" id="PF11952">
    <property type="entry name" value="XTBD"/>
    <property type="match status" value="1"/>
</dbReference>
<dbReference type="PROSITE" id="PS51827">
    <property type="entry name" value="XTBD"/>
    <property type="match status" value="1"/>
</dbReference>
<accession>Q7ZXV6</accession>
<organism>
    <name type="scientific">Xenopus laevis</name>
    <name type="common">African clawed frog</name>
    <dbReference type="NCBI Taxonomy" id="8355"/>
    <lineage>
        <taxon>Eukaryota</taxon>
        <taxon>Metazoa</taxon>
        <taxon>Chordata</taxon>
        <taxon>Craniata</taxon>
        <taxon>Vertebrata</taxon>
        <taxon>Euteleostomi</taxon>
        <taxon>Amphibia</taxon>
        <taxon>Batrachia</taxon>
        <taxon>Anura</taxon>
        <taxon>Pipoidea</taxon>
        <taxon>Pipidae</taxon>
        <taxon>Xenopodinae</taxon>
        <taxon>Xenopus</taxon>
        <taxon>Xenopus</taxon>
    </lineage>
</organism>
<feature type="chain" id="PRO_0000324342" description="Protein CDKN2AIP homolog A">
    <location>
        <begin position="1"/>
        <end position="398"/>
    </location>
</feature>
<feature type="domain" description="XRN2-binding (XTBD)" evidence="2">
    <location>
        <begin position="19"/>
        <end position="124"/>
    </location>
</feature>
<feature type="region of interest" description="Disordered" evidence="3">
    <location>
        <begin position="118"/>
        <end position="245"/>
    </location>
</feature>
<feature type="compositionally biased region" description="Basic and acidic residues" evidence="3">
    <location>
        <begin position="131"/>
        <end position="147"/>
    </location>
</feature>
<feature type="compositionally biased region" description="Polar residues" evidence="3">
    <location>
        <begin position="154"/>
        <end position="163"/>
    </location>
</feature>
<feature type="compositionally biased region" description="Polar residues" evidence="3">
    <location>
        <begin position="189"/>
        <end position="199"/>
    </location>
</feature>
<feature type="compositionally biased region" description="Polar residues" evidence="3">
    <location>
        <begin position="226"/>
        <end position="238"/>
    </location>
</feature>
<protein>
    <recommendedName>
        <fullName>Protein CDKN2AIP homolog A</fullName>
    </recommendedName>
</protein>
<name>CARFA_XENLA</name>
<proteinExistence type="evidence at transcript level"/>